<accession>Q9M2J0</accession>
<sequence>MGKQINNTFTWVIKNLSTLQGLEVRSKIFVVGGCKWRLIAYPEVNDADGYLSLSVYLGVPDCCESLPSGWKRHAKFSLTIVNQLSEGLSQVQETQAWFDENAPGWGFPPMLNLKDVSDKYGGFLVNDEVMVAVAVDVIEVVGSLDAPEMSESMDIKGFKVLPSQVKSVNRLFESHPDIASKFSIKNQSLKTAYMNVLLCLAETLHQSPMEISEDDLSDAKTTLAYMKSVGFKLDWLEKKLDELFEKKKEEADKIRMQNIEEELKDLRQKCSSLEALLKKEKTGVLAAKAPFLFFNNVNDDDLKWILRAVMYTLIMMLFISI</sequence>
<gene>
    <name type="ordered locus">At3g58260</name>
    <name type="ORF">F9D24.170</name>
</gene>
<organism>
    <name type="scientific">Arabidopsis thaliana</name>
    <name type="common">Mouse-ear cress</name>
    <dbReference type="NCBI Taxonomy" id="3702"/>
    <lineage>
        <taxon>Eukaryota</taxon>
        <taxon>Viridiplantae</taxon>
        <taxon>Streptophyta</taxon>
        <taxon>Embryophyta</taxon>
        <taxon>Tracheophyta</taxon>
        <taxon>Spermatophyta</taxon>
        <taxon>Magnoliopsida</taxon>
        <taxon>eudicotyledons</taxon>
        <taxon>Gunneridae</taxon>
        <taxon>Pentapetalae</taxon>
        <taxon>rosids</taxon>
        <taxon>malvids</taxon>
        <taxon>Brassicales</taxon>
        <taxon>Brassicaceae</taxon>
        <taxon>Camelineae</taxon>
        <taxon>Arabidopsis</taxon>
    </lineage>
</organism>
<dbReference type="EMBL" id="AL137081">
    <property type="protein sequence ID" value="CAB68164.1"/>
    <property type="molecule type" value="Genomic_DNA"/>
</dbReference>
<dbReference type="EMBL" id="CP002686">
    <property type="protein sequence ID" value="AEE79760.1"/>
    <property type="molecule type" value="Genomic_DNA"/>
</dbReference>
<dbReference type="PIR" id="T45986">
    <property type="entry name" value="T45986"/>
</dbReference>
<dbReference type="RefSeq" id="NP_191385.1">
    <property type="nucleotide sequence ID" value="NM_115688.2"/>
</dbReference>
<dbReference type="FunCoup" id="Q9M2J0">
    <property type="interactions" value="47"/>
</dbReference>
<dbReference type="PaxDb" id="3702-AT3G58260.1"/>
<dbReference type="EnsemblPlants" id="AT3G58260.1">
    <property type="protein sequence ID" value="AT3G58260.1"/>
    <property type="gene ID" value="AT3G58260"/>
</dbReference>
<dbReference type="GeneID" id="824995"/>
<dbReference type="Gramene" id="AT3G58260.1">
    <property type="protein sequence ID" value="AT3G58260.1"/>
    <property type="gene ID" value="AT3G58260"/>
</dbReference>
<dbReference type="KEGG" id="ath:AT3G58260"/>
<dbReference type="Araport" id="AT3G58260"/>
<dbReference type="TAIR" id="AT3G58260"/>
<dbReference type="eggNOG" id="KOG1987">
    <property type="taxonomic scope" value="Eukaryota"/>
</dbReference>
<dbReference type="HOGENOM" id="CLU_026537_0_0_1"/>
<dbReference type="InParanoid" id="Q9M2J0"/>
<dbReference type="OMA" id="QAWFDEN"/>
<dbReference type="PhylomeDB" id="Q9M2J0"/>
<dbReference type="PRO" id="PR:Q9M2J0"/>
<dbReference type="Proteomes" id="UP000006548">
    <property type="component" value="Chromosome 3"/>
</dbReference>
<dbReference type="ExpressionAtlas" id="Q9M2J0">
    <property type="expression patterns" value="baseline and differential"/>
</dbReference>
<dbReference type="CDD" id="cd00121">
    <property type="entry name" value="MATH"/>
    <property type="match status" value="1"/>
</dbReference>
<dbReference type="Gene3D" id="2.60.210.10">
    <property type="entry name" value="Apoptosis, Tumor Necrosis Factor Receptor Associated Protein 2, Chain A"/>
    <property type="match status" value="1"/>
</dbReference>
<dbReference type="InterPro" id="IPR050804">
    <property type="entry name" value="MATH-CC_domain_protein"/>
</dbReference>
<dbReference type="InterPro" id="IPR002083">
    <property type="entry name" value="MATH/TRAF_dom"/>
</dbReference>
<dbReference type="InterPro" id="IPR008974">
    <property type="entry name" value="TRAF-like"/>
</dbReference>
<dbReference type="PANTHER" id="PTHR46236:SF21">
    <property type="entry name" value="TRAF-LIKE FAMILY PROTEIN-RELATED"/>
    <property type="match status" value="1"/>
</dbReference>
<dbReference type="PANTHER" id="PTHR46236">
    <property type="entry name" value="TRAF-LIKE SUPERFAMILY PROTEIN"/>
    <property type="match status" value="1"/>
</dbReference>
<dbReference type="Pfam" id="PF22486">
    <property type="entry name" value="MATH_2"/>
    <property type="match status" value="1"/>
</dbReference>
<dbReference type="SMART" id="SM00061">
    <property type="entry name" value="MATH"/>
    <property type="match status" value="1"/>
</dbReference>
<dbReference type="SUPFAM" id="SSF49599">
    <property type="entry name" value="TRAF domain-like"/>
    <property type="match status" value="1"/>
</dbReference>
<dbReference type="PROSITE" id="PS50144">
    <property type="entry name" value="MATH"/>
    <property type="match status" value="1"/>
</dbReference>
<name>MCC20_ARATH</name>
<proteinExistence type="evidence at protein level"/>
<reference key="1">
    <citation type="journal article" date="2000" name="Nature">
        <title>Sequence and analysis of chromosome 3 of the plant Arabidopsis thaliana.</title>
        <authorList>
            <person name="Salanoubat M."/>
            <person name="Lemcke K."/>
            <person name="Rieger M."/>
            <person name="Ansorge W."/>
            <person name="Unseld M."/>
            <person name="Fartmann B."/>
            <person name="Valle G."/>
            <person name="Bloecker H."/>
            <person name="Perez-Alonso M."/>
            <person name="Obermaier B."/>
            <person name="Delseny M."/>
            <person name="Boutry M."/>
            <person name="Grivell L.A."/>
            <person name="Mache R."/>
            <person name="Puigdomenech P."/>
            <person name="De Simone V."/>
            <person name="Choisne N."/>
            <person name="Artiguenave F."/>
            <person name="Robert C."/>
            <person name="Brottier P."/>
            <person name="Wincker P."/>
            <person name="Cattolico L."/>
            <person name="Weissenbach J."/>
            <person name="Saurin W."/>
            <person name="Quetier F."/>
            <person name="Schaefer M."/>
            <person name="Mueller-Auer S."/>
            <person name="Gabel C."/>
            <person name="Fuchs M."/>
            <person name="Benes V."/>
            <person name="Wurmbach E."/>
            <person name="Drzonek H."/>
            <person name="Erfle H."/>
            <person name="Jordan N."/>
            <person name="Bangert S."/>
            <person name="Wiedelmann R."/>
            <person name="Kranz H."/>
            <person name="Voss H."/>
            <person name="Holland R."/>
            <person name="Brandt P."/>
            <person name="Nyakatura G."/>
            <person name="Vezzi A."/>
            <person name="D'Angelo M."/>
            <person name="Pallavicini A."/>
            <person name="Toppo S."/>
            <person name="Simionati B."/>
            <person name="Conrad A."/>
            <person name="Hornischer K."/>
            <person name="Kauer G."/>
            <person name="Loehnert T.-H."/>
            <person name="Nordsiek G."/>
            <person name="Reichelt J."/>
            <person name="Scharfe M."/>
            <person name="Schoen O."/>
            <person name="Bargues M."/>
            <person name="Terol J."/>
            <person name="Climent J."/>
            <person name="Navarro P."/>
            <person name="Collado C."/>
            <person name="Perez-Perez A."/>
            <person name="Ottenwaelder B."/>
            <person name="Duchemin D."/>
            <person name="Cooke R."/>
            <person name="Laudie M."/>
            <person name="Berger-Llauro C."/>
            <person name="Purnelle B."/>
            <person name="Masuy D."/>
            <person name="de Haan M."/>
            <person name="Maarse A.C."/>
            <person name="Alcaraz J.-P."/>
            <person name="Cottet A."/>
            <person name="Casacuberta E."/>
            <person name="Monfort A."/>
            <person name="Argiriou A."/>
            <person name="Flores M."/>
            <person name="Liguori R."/>
            <person name="Vitale D."/>
            <person name="Mannhaupt G."/>
            <person name="Haase D."/>
            <person name="Schoof H."/>
            <person name="Rudd S."/>
            <person name="Zaccaria P."/>
            <person name="Mewes H.-W."/>
            <person name="Mayer K.F.X."/>
            <person name="Kaul S."/>
            <person name="Town C.D."/>
            <person name="Koo H.L."/>
            <person name="Tallon L.J."/>
            <person name="Jenkins J."/>
            <person name="Rooney T."/>
            <person name="Rizzo M."/>
            <person name="Walts A."/>
            <person name="Utterback T."/>
            <person name="Fujii C.Y."/>
            <person name="Shea T.P."/>
            <person name="Creasy T.H."/>
            <person name="Haas B."/>
            <person name="Maiti R."/>
            <person name="Wu D."/>
            <person name="Peterson J."/>
            <person name="Van Aken S."/>
            <person name="Pai G."/>
            <person name="Militscher J."/>
            <person name="Sellers P."/>
            <person name="Gill J.E."/>
            <person name="Feldblyum T.V."/>
            <person name="Preuss D."/>
            <person name="Lin X."/>
            <person name="Nierman W.C."/>
            <person name="Salzberg S.L."/>
            <person name="White O."/>
            <person name="Venter J.C."/>
            <person name="Fraser C.M."/>
            <person name="Kaneko T."/>
            <person name="Nakamura Y."/>
            <person name="Sato S."/>
            <person name="Kato T."/>
            <person name="Asamizu E."/>
            <person name="Sasamoto S."/>
            <person name="Kimura T."/>
            <person name="Idesawa K."/>
            <person name="Kawashima K."/>
            <person name="Kishida Y."/>
            <person name="Kiyokawa C."/>
            <person name="Kohara M."/>
            <person name="Matsumoto M."/>
            <person name="Matsuno A."/>
            <person name="Muraki A."/>
            <person name="Nakayama S."/>
            <person name="Nakazaki N."/>
            <person name="Shinpo S."/>
            <person name="Takeuchi C."/>
            <person name="Wada T."/>
            <person name="Watanabe A."/>
            <person name="Yamada M."/>
            <person name="Yasuda M."/>
            <person name="Tabata S."/>
        </authorList>
    </citation>
    <scope>NUCLEOTIDE SEQUENCE [LARGE SCALE GENOMIC DNA]</scope>
    <source>
        <strain>cv. Columbia</strain>
    </source>
</reference>
<reference key="2">
    <citation type="journal article" date="2017" name="Plant J.">
        <title>Araport11: a complete reannotation of the Arabidopsis thaliana reference genome.</title>
        <authorList>
            <person name="Cheng C.Y."/>
            <person name="Krishnakumar V."/>
            <person name="Chan A.P."/>
            <person name="Thibaud-Nissen F."/>
            <person name="Schobel S."/>
            <person name="Town C.D."/>
        </authorList>
    </citation>
    <scope>GENOME REANNOTATION</scope>
    <source>
        <strain>cv. Columbia</strain>
    </source>
</reference>
<reference key="3">
    <citation type="journal article" date="2007" name="Mol. Cell. Proteomics">
        <title>Multidimensional protein identification technology (MudPIT) analysis of ubiquitinated proteins in plants.</title>
        <authorList>
            <person name="Maor R."/>
            <person name="Jones A."/>
            <person name="Nuehse T.S."/>
            <person name="Studholme D.J."/>
            <person name="Peck S.C."/>
            <person name="Shirasu K."/>
        </authorList>
    </citation>
    <scope>IDENTIFICATION BY MASS SPECTROMETRY [LARGE SCALE ANALYSIS]</scope>
    <source>
        <strain>cv. Landsberg erecta</strain>
    </source>
</reference>
<reference key="4">
    <citation type="journal article" date="2010" name="Plant Physiol.">
        <title>RTM3, which controls long-distance movement of potyviruses, is a member of a new plant gene family encoding a meprin and TRAF homology domain-containing protein.</title>
        <authorList>
            <person name="Cosson P."/>
            <person name="Sofer L."/>
            <person name="Le Q.H."/>
            <person name="Leger V."/>
            <person name="Schurdi-Levraud V."/>
            <person name="Whitham S.A."/>
            <person name="Yamamoto M.L."/>
            <person name="Gopalan S."/>
            <person name="Le Gall O."/>
            <person name="Candresse T."/>
            <person name="Carrington J.C."/>
            <person name="Revers F."/>
        </authorList>
    </citation>
    <scope>GENE FAMILY</scope>
</reference>
<keyword id="KW-0175">Coiled coil</keyword>
<keyword id="KW-1185">Reference proteome</keyword>
<feature type="chain" id="PRO_0000429297" description="MATH domain and coiled-coil domain-containing protein At3g58260">
    <location>
        <begin position="1"/>
        <end position="321"/>
    </location>
</feature>
<feature type="domain" description="MATH" evidence="2">
    <location>
        <begin position="6"/>
        <end position="135"/>
    </location>
</feature>
<feature type="coiled-coil region" evidence="1">
    <location>
        <begin position="232"/>
        <end position="283"/>
    </location>
</feature>
<protein>
    <recommendedName>
        <fullName>MATH domain and coiled-coil domain-containing protein At3g58260</fullName>
    </recommendedName>
    <alternativeName>
        <fullName>RTM3-like protein At3g58260</fullName>
    </alternativeName>
</protein>
<evidence type="ECO:0000255" key="1"/>
<evidence type="ECO:0000255" key="2">
    <source>
        <dbReference type="PROSITE-ProRule" id="PRU00129"/>
    </source>
</evidence>